<evidence type="ECO:0000250" key="1"/>
<evidence type="ECO:0000255" key="2"/>
<evidence type="ECO:0000256" key="3">
    <source>
        <dbReference type="SAM" id="MobiDB-lite"/>
    </source>
</evidence>
<evidence type="ECO:0000305" key="4"/>
<reference key="1">
    <citation type="journal article" date="2011" name="MBio">
        <title>Genome variation in Cryptococcus gattii, an emerging pathogen of immunocompetent hosts.</title>
        <authorList>
            <person name="D'Souza C.A."/>
            <person name="Kronstad J.W."/>
            <person name="Taylor G."/>
            <person name="Warren R."/>
            <person name="Yuen M."/>
            <person name="Hu G."/>
            <person name="Jung W.H."/>
            <person name="Sham A."/>
            <person name="Kidd S.E."/>
            <person name="Tangen K."/>
            <person name="Lee N."/>
            <person name="Zeilmaker T."/>
            <person name="Sawkins J."/>
            <person name="McVicker G."/>
            <person name="Shah S."/>
            <person name="Gnerre S."/>
            <person name="Griggs A."/>
            <person name="Zeng Q."/>
            <person name="Bartlett K."/>
            <person name="Li W."/>
            <person name="Wang X."/>
            <person name="Heitman J."/>
            <person name="Stajich J.E."/>
            <person name="Fraser J.A."/>
            <person name="Meyer W."/>
            <person name="Carter D."/>
            <person name="Schein J."/>
            <person name="Krzywinski M."/>
            <person name="Kwon-Chung K.J."/>
            <person name="Varma A."/>
            <person name="Wang J."/>
            <person name="Brunham R."/>
            <person name="Fyfe M."/>
            <person name="Ouellette B.F.F."/>
            <person name="Siddiqui A."/>
            <person name="Marra M."/>
            <person name="Jones S."/>
            <person name="Holt R."/>
            <person name="Birren B.W."/>
            <person name="Galagan J.E."/>
            <person name="Cuomo C.A."/>
        </authorList>
    </citation>
    <scope>NUCLEOTIDE SEQUENCE [LARGE SCALE GENOMIC DNA]</scope>
    <source>
        <strain>WM276 / ATCC MYA-4071</strain>
    </source>
</reference>
<comment type="function">
    <text evidence="1">Probable component of the endoplasmic reticulum-associated degradation (ERAD) pathway.</text>
</comment>
<comment type="similarity">
    <text evidence="4">Belongs to the LCL2 family.</text>
</comment>
<feature type="signal peptide" evidence="2">
    <location>
        <begin position="1"/>
        <end position="18"/>
    </location>
</feature>
<feature type="chain" id="PRO_0000408606" description="Long chronological lifespan protein 2">
    <location>
        <begin position="19"/>
        <end position="125"/>
    </location>
</feature>
<feature type="region of interest" description="Disordered" evidence="3">
    <location>
        <begin position="33"/>
        <end position="52"/>
    </location>
</feature>
<feature type="compositionally biased region" description="Low complexity" evidence="3">
    <location>
        <begin position="35"/>
        <end position="46"/>
    </location>
</feature>
<accession>E6R3N7</accession>
<keyword id="KW-0732">Signal</keyword>
<organism>
    <name type="scientific">Cryptococcus gattii serotype B (strain WM276 / ATCC MYA-4071)</name>
    <name type="common">Filobasidiella gattii</name>
    <name type="synonym">Cryptococcus bacillisporus</name>
    <dbReference type="NCBI Taxonomy" id="367775"/>
    <lineage>
        <taxon>Eukaryota</taxon>
        <taxon>Fungi</taxon>
        <taxon>Dikarya</taxon>
        <taxon>Basidiomycota</taxon>
        <taxon>Agaricomycotina</taxon>
        <taxon>Tremellomycetes</taxon>
        <taxon>Tremellales</taxon>
        <taxon>Cryptococcaceae</taxon>
        <taxon>Cryptococcus</taxon>
        <taxon>Cryptococcus gattii species complex</taxon>
    </lineage>
</organism>
<name>LCL2_CRYGW</name>
<gene>
    <name type="primary">LCL2</name>
    <name type="ordered locus">CGB_D3360W</name>
</gene>
<sequence length="125" mass="13794">MNFVLLALAILSFPLAFAQFGHFFQQGFPFGGGFQQQQQQQEQHAPGRQHKGWTESERVHCRAGYVCPASLACVPTPADCPCPYPEDIKCVIPDNRPRDEGEGPPFVCVRGDTGCAQVLEFSKPI</sequence>
<dbReference type="EMBL" id="CP000289">
    <property type="protein sequence ID" value="ADV21695.1"/>
    <property type="molecule type" value="Genomic_DNA"/>
</dbReference>
<dbReference type="RefSeq" id="XP_003193482.1">
    <property type="nucleotide sequence ID" value="XM_003193434.1"/>
</dbReference>
<dbReference type="GeneID" id="10191219"/>
<dbReference type="KEGG" id="cgi:CGB_D3360W"/>
<dbReference type="VEuPathDB" id="FungiDB:CGB_D3360W"/>
<dbReference type="eggNOG" id="ENOG502S416">
    <property type="taxonomic scope" value="Eukaryota"/>
</dbReference>
<dbReference type="HOGENOM" id="CLU_142363_2_1_1"/>
<dbReference type="OrthoDB" id="2234316at2759"/>
<dbReference type="Proteomes" id="UP000007805">
    <property type="component" value="Chromosome D"/>
</dbReference>
<dbReference type="GO" id="GO:0036503">
    <property type="term" value="P:ERAD pathway"/>
    <property type="evidence" value="ECO:0007669"/>
    <property type="project" value="TreeGrafter"/>
</dbReference>
<dbReference type="InterPro" id="IPR034543">
    <property type="entry name" value="LCL2"/>
</dbReference>
<dbReference type="PANTHER" id="PTHR38425">
    <property type="entry name" value="LONG CHRONOLOGICAL LIFESPAN PROTEIN 2"/>
    <property type="match status" value="1"/>
</dbReference>
<dbReference type="PANTHER" id="PTHR38425:SF1">
    <property type="entry name" value="LONG CHRONOLOGICAL LIFESPAN PROTEIN 2"/>
    <property type="match status" value="1"/>
</dbReference>
<proteinExistence type="inferred from homology"/>
<protein>
    <recommendedName>
        <fullName>Long chronological lifespan protein 2</fullName>
    </recommendedName>
</protein>